<keyword id="KW-0311">Gluconate utilization</keyword>
<keyword id="KW-0521">NADP</keyword>
<keyword id="KW-0560">Oxidoreductase</keyword>
<keyword id="KW-0570">Pentose shunt</keyword>
<accession>P63335</accession>
<accession>Q99TY2</accession>
<proteinExistence type="inferred from homology"/>
<feature type="chain" id="PRO_0000090057" description="6-phosphogluconate dehydrogenase, decarboxylating">
    <location>
        <begin position="1"/>
        <end position="468"/>
    </location>
</feature>
<feature type="active site" description="Proton acceptor" evidence="1">
    <location>
        <position position="182"/>
    </location>
</feature>
<feature type="active site" description="Proton donor" evidence="1">
    <location>
        <position position="189"/>
    </location>
</feature>
<feature type="binding site" evidence="1">
    <location>
        <begin position="9"/>
        <end position="14"/>
    </location>
    <ligand>
        <name>NADP(+)</name>
        <dbReference type="ChEBI" id="CHEBI:58349"/>
    </ligand>
</feature>
<feature type="binding site" evidence="1">
    <location>
        <begin position="32"/>
        <end position="34"/>
    </location>
    <ligand>
        <name>NADP(+)</name>
        <dbReference type="ChEBI" id="CHEBI:58349"/>
    </ligand>
</feature>
<feature type="binding site" evidence="1">
    <location>
        <begin position="73"/>
        <end position="75"/>
    </location>
    <ligand>
        <name>NADP(+)</name>
        <dbReference type="ChEBI" id="CHEBI:58349"/>
    </ligand>
</feature>
<feature type="binding site" evidence="1">
    <location>
        <position position="101"/>
    </location>
    <ligand>
        <name>NADP(+)</name>
        <dbReference type="ChEBI" id="CHEBI:58349"/>
    </ligand>
</feature>
<feature type="binding site" description="in other chain" evidence="1">
    <location>
        <position position="101"/>
    </location>
    <ligand>
        <name>substrate</name>
        <note>ligand shared between dimeric partners</note>
    </ligand>
</feature>
<feature type="binding site" description="in other chain" evidence="1">
    <location>
        <begin position="127"/>
        <end position="129"/>
    </location>
    <ligand>
        <name>substrate</name>
        <note>ligand shared between dimeric partners</note>
    </ligand>
</feature>
<feature type="binding site" description="in other chain" evidence="1">
    <location>
        <begin position="185"/>
        <end position="186"/>
    </location>
    <ligand>
        <name>substrate</name>
        <note>ligand shared between dimeric partners</note>
    </ligand>
</feature>
<feature type="binding site" description="in other chain" evidence="1">
    <location>
        <position position="190"/>
    </location>
    <ligand>
        <name>substrate</name>
        <note>ligand shared between dimeric partners</note>
    </ligand>
</feature>
<feature type="binding site" description="in other chain" evidence="1">
    <location>
        <position position="259"/>
    </location>
    <ligand>
        <name>substrate</name>
        <note>ligand shared between dimeric partners</note>
    </ligand>
</feature>
<feature type="binding site" description="in other chain" evidence="1">
    <location>
        <position position="286"/>
    </location>
    <ligand>
        <name>substrate</name>
        <note>ligand shared between dimeric partners</note>
    </ligand>
</feature>
<feature type="binding site" evidence="1">
    <location>
        <position position="444"/>
    </location>
    <ligand>
        <name>substrate</name>
        <note>ligand shared between dimeric partners</note>
    </ligand>
</feature>
<feature type="binding site" evidence="1">
    <location>
        <position position="450"/>
    </location>
    <ligand>
        <name>substrate</name>
        <note>ligand shared between dimeric partners</note>
    </ligand>
</feature>
<gene>
    <name type="primary">gnd</name>
    <name type="ordered locus">MW1464</name>
</gene>
<protein>
    <recommendedName>
        <fullName>6-phosphogluconate dehydrogenase, decarboxylating</fullName>
        <ecNumber>1.1.1.44</ecNumber>
    </recommendedName>
</protein>
<reference key="1">
    <citation type="journal article" date="2002" name="Lancet">
        <title>Genome and virulence determinants of high virulence community-acquired MRSA.</title>
        <authorList>
            <person name="Baba T."/>
            <person name="Takeuchi F."/>
            <person name="Kuroda M."/>
            <person name="Yuzawa H."/>
            <person name="Aoki K."/>
            <person name="Oguchi A."/>
            <person name="Nagai Y."/>
            <person name="Iwama N."/>
            <person name="Asano K."/>
            <person name="Naimi T."/>
            <person name="Kuroda H."/>
            <person name="Cui L."/>
            <person name="Yamamoto K."/>
            <person name="Hiramatsu K."/>
        </authorList>
    </citation>
    <scope>NUCLEOTIDE SEQUENCE [LARGE SCALE GENOMIC DNA]</scope>
    <source>
        <strain>MW2</strain>
    </source>
</reference>
<name>6PGD_STAAW</name>
<organism>
    <name type="scientific">Staphylococcus aureus (strain MW2)</name>
    <dbReference type="NCBI Taxonomy" id="196620"/>
    <lineage>
        <taxon>Bacteria</taxon>
        <taxon>Bacillati</taxon>
        <taxon>Bacillota</taxon>
        <taxon>Bacilli</taxon>
        <taxon>Bacillales</taxon>
        <taxon>Staphylococcaceae</taxon>
        <taxon>Staphylococcus</taxon>
    </lineage>
</organism>
<sequence length="468" mass="51803">MTQQIGVIGLAVMGKNLAWNIESRGYSVSVFNRSSEKTDLMVEESKGKNIHPTYSLEEFVNSLEKPRKILLMVQAGKATDATIDSLLPLLDDGDILIDGGNTNYQDTIRRNKALAQSAINFIGMGVSGGEIGALTGPSLMPGGQEEAYNKVADILDAIAAKAKDGASCVTYIGPNGAGHYVKMVHNGIEYADMQLIAESYAMMKELLGMSHEDIAQTFKDWNAGELESYLIEITGDIFMKLDENKEALVEKILDTAGQKGTGKWTSINALELGIPLTIITESVFARFISSIKEERVNASKELNGPKASFDGDKKDFLEKIRKALYMSKICSYAQGFAQMRKASEDNEWNLKLGDLAMIWREGCIIRAQFLQKIKDAYDNNPGLQNLLLDPYFKNIVTEYQDALRDVVATGVQNGVPTPGFSSSINYYDSYRAADLPANLIQAQRDYFGAHTYERKDKEGVFHTQWIEE</sequence>
<dbReference type="EC" id="1.1.1.44"/>
<dbReference type="EMBL" id="BA000033">
    <property type="protein sequence ID" value="BAB95329.1"/>
    <property type="molecule type" value="Genomic_DNA"/>
</dbReference>
<dbReference type="SMR" id="P63335"/>
<dbReference type="KEGG" id="sam:MW1464"/>
<dbReference type="HOGENOM" id="CLU_024540_4_2_9"/>
<dbReference type="UniPathway" id="UPA00115">
    <property type="reaction ID" value="UER00410"/>
</dbReference>
<dbReference type="GO" id="GO:0050661">
    <property type="term" value="F:NADP binding"/>
    <property type="evidence" value="ECO:0007669"/>
    <property type="project" value="InterPro"/>
</dbReference>
<dbReference type="GO" id="GO:0004616">
    <property type="term" value="F:phosphogluconate dehydrogenase (decarboxylating) activity"/>
    <property type="evidence" value="ECO:0007669"/>
    <property type="project" value="UniProtKB-EC"/>
</dbReference>
<dbReference type="GO" id="GO:0019521">
    <property type="term" value="P:D-gluconate metabolic process"/>
    <property type="evidence" value="ECO:0007669"/>
    <property type="project" value="UniProtKB-KW"/>
</dbReference>
<dbReference type="GO" id="GO:0016054">
    <property type="term" value="P:organic acid catabolic process"/>
    <property type="evidence" value="ECO:0007669"/>
    <property type="project" value="UniProtKB-ARBA"/>
</dbReference>
<dbReference type="GO" id="GO:0006098">
    <property type="term" value="P:pentose-phosphate shunt"/>
    <property type="evidence" value="ECO:0007669"/>
    <property type="project" value="UniProtKB-UniPathway"/>
</dbReference>
<dbReference type="FunFam" id="1.10.1040.10:FF:000002">
    <property type="entry name" value="6-phosphogluconate dehydrogenase, decarboxylating"/>
    <property type="match status" value="1"/>
</dbReference>
<dbReference type="FunFam" id="1.20.5.320:FF:000001">
    <property type="entry name" value="6-phosphogluconate dehydrogenase, decarboxylating"/>
    <property type="match status" value="1"/>
</dbReference>
<dbReference type="FunFam" id="3.40.50.720:FF:000007">
    <property type="entry name" value="6-phosphogluconate dehydrogenase, decarboxylating"/>
    <property type="match status" value="1"/>
</dbReference>
<dbReference type="Gene3D" id="1.20.5.320">
    <property type="entry name" value="6-Phosphogluconate Dehydrogenase, domain 3"/>
    <property type="match status" value="1"/>
</dbReference>
<dbReference type="Gene3D" id="1.10.1040.10">
    <property type="entry name" value="N-(1-d-carboxylethyl)-l-norvaline Dehydrogenase, domain 2"/>
    <property type="match status" value="1"/>
</dbReference>
<dbReference type="Gene3D" id="3.40.50.720">
    <property type="entry name" value="NAD(P)-binding Rossmann-like Domain"/>
    <property type="match status" value="1"/>
</dbReference>
<dbReference type="InterPro" id="IPR008927">
    <property type="entry name" value="6-PGluconate_DH-like_C_sf"/>
</dbReference>
<dbReference type="InterPro" id="IPR013328">
    <property type="entry name" value="6PGD_dom2"/>
</dbReference>
<dbReference type="InterPro" id="IPR006114">
    <property type="entry name" value="6PGDH_C"/>
</dbReference>
<dbReference type="InterPro" id="IPR006113">
    <property type="entry name" value="6PGDH_Gnd/GntZ"/>
</dbReference>
<dbReference type="InterPro" id="IPR006115">
    <property type="entry name" value="6PGDH_NADP-bd"/>
</dbReference>
<dbReference type="InterPro" id="IPR006184">
    <property type="entry name" value="6PGdom_BS"/>
</dbReference>
<dbReference type="InterPro" id="IPR036291">
    <property type="entry name" value="NAD(P)-bd_dom_sf"/>
</dbReference>
<dbReference type="InterPro" id="IPR006183">
    <property type="entry name" value="Pgluconate_DH"/>
</dbReference>
<dbReference type="NCBIfam" id="TIGR00873">
    <property type="entry name" value="gnd"/>
    <property type="match status" value="1"/>
</dbReference>
<dbReference type="NCBIfam" id="NF006765">
    <property type="entry name" value="PRK09287.1"/>
    <property type="match status" value="1"/>
</dbReference>
<dbReference type="PANTHER" id="PTHR11811">
    <property type="entry name" value="6-PHOSPHOGLUCONATE DEHYDROGENASE"/>
    <property type="match status" value="1"/>
</dbReference>
<dbReference type="Pfam" id="PF00393">
    <property type="entry name" value="6PGD"/>
    <property type="match status" value="1"/>
</dbReference>
<dbReference type="Pfam" id="PF03446">
    <property type="entry name" value="NAD_binding_2"/>
    <property type="match status" value="1"/>
</dbReference>
<dbReference type="PIRSF" id="PIRSF000109">
    <property type="entry name" value="6PGD"/>
    <property type="match status" value="1"/>
</dbReference>
<dbReference type="PRINTS" id="PR00076">
    <property type="entry name" value="6PGDHDRGNASE"/>
</dbReference>
<dbReference type="SMART" id="SM01350">
    <property type="entry name" value="6PGD"/>
    <property type="match status" value="1"/>
</dbReference>
<dbReference type="SUPFAM" id="SSF48179">
    <property type="entry name" value="6-phosphogluconate dehydrogenase C-terminal domain-like"/>
    <property type="match status" value="1"/>
</dbReference>
<dbReference type="SUPFAM" id="SSF51735">
    <property type="entry name" value="NAD(P)-binding Rossmann-fold domains"/>
    <property type="match status" value="1"/>
</dbReference>
<dbReference type="PROSITE" id="PS00461">
    <property type="entry name" value="6PGD"/>
    <property type="match status" value="1"/>
</dbReference>
<evidence type="ECO:0000250" key="1"/>
<evidence type="ECO:0000305" key="2"/>
<comment type="function">
    <text evidence="1">Catalyzes the oxidative decarboxylation of 6-phosphogluconate to ribulose 5-phosphate and CO(2), with concomitant reduction of NADP to NADPH.</text>
</comment>
<comment type="catalytic activity">
    <reaction>
        <text>6-phospho-D-gluconate + NADP(+) = D-ribulose 5-phosphate + CO2 + NADPH</text>
        <dbReference type="Rhea" id="RHEA:10116"/>
        <dbReference type="ChEBI" id="CHEBI:16526"/>
        <dbReference type="ChEBI" id="CHEBI:57783"/>
        <dbReference type="ChEBI" id="CHEBI:58121"/>
        <dbReference type="ChEBI" id="CHEBI:58349"/>
        <dbReference type="ChEBI" id="CHEBI:58759"/>
        <dbReference type="EC" id="1.1.1.44"/>
    </reaction>
</comment>
<comment type="pathway">
    <text>Carbohydrate degradation; pentose phosphate pathway; D-ribulose 5-phosphate from D-glucose 6-phosphate (oxidative stage): step 3/3.</text>
</comment>
<comment type="subunit">
    <text evidence="1">Homodimer.</text>
</comment>
<comment type="similarity">
    <text evidence="2">Belongs to the 6-phosphogluconate dehydrogenase family.</text>
</comment>